<comment type="similarity">
    <text evidence="1">Belongs to the UPF0229 family.</text>
</comment>
<gene>
    <name type="ordered locus">Tbd_1233</name>
</gene>
<reference key="1">
    <citation type="journal article" date="2006" name="J. Bacteriol.">
        <title>The genome sequence of the obligately chemolithoautotrophic, facultatively anaerobic bacterium Thiobacillus denitrificans.</title>
        <authorList>
            <person name="Beller H.R."/>
            <person name="Chain P.S."/>
            <person name="Letain T.E."/>
            <person name="Chakicherla A."/>
            <person name="Larimer F.W."/>
            <person name="Richardson P.M."/>
            <person name="Coleman M.A."/>
            <person name="Wood A.P."/>
            <person name="Kelly D.P."/>
        </authorList>
    </citation>
    <scope>NUCLEOTIDE SEQUENCE [LARGE SCALE GENOMIC DNA]</scope>
    <source>
        <strain>ATCC 25259 / T1</strain>
    </source>
</reference>
<keyword id="KW-1185">Reference proteome</keyword>
<accession>Q3SJH5</accession>
<evidence type="ECO:0000255" key="1">
    <source>
        <dbReference type="HAMAP-Rule" id="MF_01232"/>
    </source>
</evidence>
<evidence type="ECO:0000256" key="2">
    <source>
        <dbReference type="SAM" id="MobiDB-lite"/>
    </source>
</evidence>
<dbReference type="EMBL" id="CP000116">
    <property type="protein sequence ID" value="AAZ97186.1"/>
    <property type="molecule type" value="Genomic_DNA"/>
</dbReference>
<dbReference type="RefSeq" id="WP_011311745.1">
    <property type="nucleotide sequence ID" value="NC_007404.1"/>
</dbReference>
<dbReference type="SMR" id="Q3SJH5"/>
<dbReference type="STRING" id="292415.Tbd_1233"/>
<dbReference type="KEGG" id="tbd:Tbd_1233"/>
<dbReference type="eggNOG" id="COG2718">
    <property type="taxonomic scope" value="Bacteria"/>
</dbReference>
<dbReference type="HOGENOM" id="CLU_049702_0_0_4"/>
<dbReference type="OrthoDB" id="9788289at2"/>
<dbReference type="Proteomes" id="UP000008291">
    <property type="component" value="Chromosome"/>
</dbReference>
<dbReference type="HAMAP" id="MF_01232">
    <property type="entry name" value="UPF0229"/>
    <property type="match status" value="1"/>
</dbReference>
<dbReference type="InterPro" id="IPR006698">
    <property type="entry name" value="UPF0229"/>
</dbReference>
<dbReference type="InterPro" id="IPR036465">
    <property type="entry name" value="vWFA_dom_sf"/>
</dbReference>
<dbReference type="NCBIfam" id="NF003707">
    <property type="entry name" value="PRK05325.1-2"/>
    <property type="match status" value="1"/>
</dbReference>
<dbReference type="NCBIfam" id="NF003708">
    <property type="entry name" value="PRK05325.1-3"/>
    <property type="match status" value="1"/>
</dbReference>
<dbReference type="PANTHER" id="PTHR30510">
    <property type="entry name" value="UPF0229 PROTEIN YEAH"/>
    <property type="match status" value="1"/>
</dbReference>
<dbReference type="PANTHER" id="PTHR30510:SF2">
    <property type="entry name" value="UPF0229 PROTEIN YEAH"/>
    <property type="match status" value="1"/>
</dbReference>
<dbReference type="Pfam" id="PF04285">
    <property type="entry name" value="DUF444"/>
    <property type="match status" value="1"/>
</dbReference>
<dbReference type="SUPFAM" id="SSF53300">
    <property type="entry name" value="vWA-like"/>
    <property type="match status" value="1"/>
</dbReference>
<sequence length="419" mass="47156">MSQLVDRRLSGKNRSAVNRQRFLRRFKAQIRKAAAQAVSGRKVADLERGEKISIPSKDLSEPIFHHGPGGRRNVILPGNREFVSGDRIDRPAGEGGGGSGGSPDGEGMDDFVFELSKEEFMDYFFEDLALPDMVKKQLAAVPEVKKSRAGFVSHGNPANLHVVRSMKQAIGRRLAMAAGPREALRQAEEALEALVAEGRGAEPDAEALREEIAALKARVAAVPFIDTWDLRYAHRVDQPVPSSQAVMFCLLDVSGSMDEDRKNIAKRFFMLLYLFLTKSYERIDVVFIRHHTVAKEVDEEEFFSSRESGGTVVSSALELMRDIILARYPTSNWNIYAAQASDGDNWDDDSPRCRDLLLQSILPLTQYFAYVEIEAEEPQSLWREYERVKAASPRFAMQRILALEDIYPVFRELFRKKAA</sequence>
<feature type="chain" id="PRO_1000066885" description="UPF0229 protein Tbd_1233">
    <location>
        <begin position="1"/>
        <end position="419"/>
    </location>
</feature>
<feature type="region of interest" description="Disordered" evidence="2">
    <location>
        <begin position="85"/>
        <end position="108"/>
    </location>
</feature>
<feature type="compositionally biased region" description="Gly residues" evidence="2">
    <location>
        <begin position="93"/>
        <end position="104"/>
    </location>
</feature>
<organism>
    <name type="scientific">Thiobacillus denitrificans (strain ATCC 25259 / T1)</name>
    <dbReference type="NCBI Taxonomy" id="292415"/>
    <lineage>
        <taxon>Bacteria</taxon>
        <taxon>Pseudomonadati</taxon>
        <taxon>Pseudomonadota</taxon>
        <taxon>Betaproteobacteria</taxon>
        <taxon>Nitrosomonadales</taxon>
        <taxon>Thiobacillaceae</taxon>
        <taxon>Thiobacillus</taxon>
    </lineage>
</organism>
<proteinExistence type="inferred from homology"/>
<name>Y1233_THIDA</name>
<protein>
    <recommendedName>
        <fullName evidence="1">UPF0229 protein Tbd_1233</fullName>
    </recommendedName>
</protein>